<evidence type="ECO:0000250" key="1"/>
<evidence type="ECO:0000255" key="2"/>
<evidence type="ECO:0000255" key="3">
    <source>
        <dbReference type="PROSITE-ProRule" id="PRU00274"/>
    </source>
</evidence>
<name>TRYA4_LUCCU</name>
<feature type="signal peptide" evidence="2">
    <location>
        <begin position="1"/>
        <end position="16"/>
    </location>
</feature>
<feature type="propeptide" id="PRO_0000028289" description="Activation peptide">
    <location>
        <begin position="17"/>
        <end position="30"/>
    </location>
</feature>
<feature type="chain" id="PRO_0000028290" description="Trypsin alpha-4">
    <location>
        <begin position="31"/>
        <end position="255"/>
    </location>
</feature>
<feature type="domain" description="Peptidase S1" evidence="3">
    <location>
        <begin position="31"/>
        <end position="253"/>
    </location>
</feature>
<feature type="active site" description="Charge relay system" evidence="1">
    <location>
        <position position="71"/>
    </location>
</feature>
<feature type="active site" description="Charge relay system" evidence="1">
    <location>
        <position position="116"/>
    </location>
</feature>
<feature type="active site" description="Charge relay system" evidence="1">
    <location>
        <position position="209"/>
    </location>
</feature>
<feature type="site" description="Required for specificity" evidence="1">
    <location>
        <position position="203"/>
    </location>
</feature>
<feature type="disulfide bond" evidence="3">
    <location>
        <begin position="56"/>
        <end position="72"/>
    </location>
</feature>
<feature type="disulfide bond" evidence="3">
    <location>
        <begin position="179"/>
        <end position="196"/>
    </location>
</feature>
<feature type="disulfide bond" evidence="3">
    <location>
        <begin position="205"/>
        <end position="229"/>
    </location>
</feature>
<sequence length="255" mass="26119">MLKFVVLLCAISCALGAAVPEGMVPQLDGRIVGGVATTISSFPWQISLQRSGSHSCGGSVYNSRIIVTAAHCLQSVSTSVLKVRRGSSYWNSGGVVVSVAAFKNHEGYNPKTMVNDIAVIRLSSSLTMSSTIKAIALTTAAPANGAAATVSGWGTTSSGGSIPAQLRYVDLKIVGRTQCASSTYGYGSQIKPSMICAYTVGKDSCQGDSGGPLVSGGRLVGVVSWGYGCAFANYPGVYADVAALRTWVVSAASSV</sequence>
<keyword id="KW-1015">Disulfide bond</keyword>
<keyword id="KW-0378">Hydrolase</keyword>
<keyword id="KW-0645">Protease</keyword>
<keyword id="KW-0964">Secreted</keyword>
<keyword id="KW-0720">Serine protease</keyword>
<keyword id="KW-0732">Signal</keyword>
<keyword id="KW-0865">Zymogen</keyword>
<accession>P35044</accession>
<protein>
    <recommendedName>
        <fullName>Trypsin alpha-4</fullName>
        <ecNumber>3.4.21.4</ecNumber>
    </recommendedName>
</protein>
<proteinExistence type="inferred from homology"/>
<organism>
    <name type="scientific">Lucilia cuprina</name>
    <name type="common">Green bottle fly</name>
    <name type="synonym">Australian sheep blowfly</name>
    <dbReference type="NCBI Taxonomy" id="7375"/>
    <lineage>
        <taxon>Eukaryota</taxon>
        <taxon>Metazoa</taxon>
        <taxon>Ecdysozoa</taxon>
        <taxon>Arthropoda</taxon>
        <taxon>Hexapoda</taxon>
        <taxon>Insecta</taxon>
        <taxon>Pterygota</taxon>
        <taxon>Neoptera</taxon>
        <taxon>Endopterygota</taxon>
        <taxon>Diptera</taxon>
        <taxon>Brachycera</taxon>
        <taxon>Muscomorpha</taxon>
        <taxon>Oestroidea</taxon>
        <taxon>Calliphoridae</taxon>
        <taxon>Luciliinae</taxon>
        <taxon>Lucilia</taxon>
    </lineage>
</organism>
<reference key="1">
    <citation type="journal article" date="1994" name="Insect Mol. Biol.">
        <title>Isolation of a trypsin-like serine protease gene family from the sheep blowfly Lucilia cuprina.</title>
        <authorList>
            <person name="Casu R.E."/>
            <person name="Jarmey J.M."/>
            <person name="Elvin C.M."/>
            <person name="Eisemann C.H."/>
        </authorList>
    </citation>
    <scope>NUCLEOTIDE SEQUENCE [GENOMIC DNA]</scope>
</reference>
<comment type="catalytic activity">
    <reaction>
        <text>Preferential cleavage: Arg-|-Xaa, Lys-|-Xaa.</text>
        <dbReference type="EC" id="3.4.21.4"/>
    </reaction>
</comment>
<comment type="subcellular location">
    <subcellularLocation>
        <location>Secreted</location>
        <location>Extracellular space</location>
    </subcellularLocation>
</comment>
<comment type="similarity">
    <text evidence="3">Belongs to the peptidase S1 family.</text>
</comment>
<dbReference type="EC" id="3.4.21.4"/>
<dbReference type="EMBL" id="L15632">
    <property type="protein sequence ID" value="AAA65932.1"/>
    <property type="molecule type" value="Genomic_DNA"/>
</dbReference>
<dbReference type="SMR" id="P35044"/>
<dbReference type="MEROPS" id="S01.110"/>
<dbReference type="OrthoDB" id="10059102at2759"/>
<dbReference type="GO" id="GO:0005576">
    <property type="term" value="C:extracellular region"/>
    <property type="evidence" value="ECO:0007669"/>
    <property type="project" value="UniProtKB-SubCell"/>
</dbReference>
<dbReference type="GO" id="GO:0004252">
    <property type="term" value="F:serine-type endopeptidase activity"/>
    <property type="evidence" value="ECO:0007669"/>
    <property type="project" value="UniProtKB-EC"/>
</dbReference>
<dbReference type="GO" id="GO:0006508">
    <property type="term" value="P:proteolysis"/>
    <property type="evidence" value="ECO:0007669"/>
    <property type="project" value="UniProtKB-KW"/>
</dbReference>
<dbReference type="CDD" id="cd00190">
    <property type="entry name" value="Tryp_SPc"/>
    <property type="match status" value="1"/>
</dbReference>
<dbReference type="FunFam" id="2.40.10.10:FF:000077">
    <property type="entry name" value="Predicted protein"/>
    <property type="match status" value="1"/>
</dbReference>
<dbReference type="Gene3D" id="2.40.10.10">
    <property type="entry name" value="Trypsin-like serine proteases"/>
    <property type="match status" value="1"/>
</dbReference>
<dbReference type="InterPro" id="IPR050430">
    <property type="entry name" value="Peptidase_S1"/>
</dbReference>
<dbReference type="InterPro" id="IPR009003">
    <property type="entry name" value="Peptidase_S1_PA"/>
</dbReference>
<dbReference type="InterPro" id="IPR043504">
    <property type="entry name" value="Peptidase_S1_PA_chymotrypsin"/>
</dbReference>
<dbReference type="InterPro" id="IPR001314">
    <property type="entry name" value="Peptidase_S1A"/>
</dbReference>
<dbReference type="InterPro" id="IPR001254">
    <property type="entry name" value="Trypsin_dom"/>
</dbReference>
<dbReference type="InterPro" id="IPR018114">
    <property type="entry name" value="TRYPSIN_HIS"/>
</dbReference>
<dbReference type="InterPro" id="IPR033116">
    <property type="entry name" value="TRYPSIN_SER"/>
</dbReference>
<dbReference type="PANTHER" id="PTHR24276:SF91">
    <property type="entry name" value="AT26814P-RELATED"/>
    <property type="match status" value="1"/>
</dbReference>
<dbReference type="PANTHER" id="PTHR24276">
    <property type="entry name" value="POLYSERASE-RELATED"/>
    <property type="match status" value="1"/>
</dbReference>
<dbReference type="Pfam" id="PF00089">
    <property type="entry name" value="Trypsin"/>
    <property type="match status" value="1"/>
</dbReference>
<dbReference type="PRINTS" id="PR00722">
    <property type="entry name" value="CHYMOTRYPSIN"/>
</dbReference>
<dbReference type="SMART" id="SM00020">
    <property type="entry name" value="Tryp_SPc"/>
    <property type="match status" value="1"/>
</dbReference>
<dbReference type="SUPFAM" id="SSF50494">
    <property type="entry name" value="Trypsin-like serine proteases"/>
    <property type="match status" value="1"/>
</dbReference>
<dbReference type="PROSITE" id="PS50240">
    <property type="entry name" value="TRYPSIN_DOM"/>
    <property type="match status" value="1"/>
</dbReference>
<dbReference type="PROSITE" id="PS00134">
    <property type="entry name" value="TRYPSIN_HIS"/>
    <property type="match status" value="1"/>
</dbReference>
<dbReference type="PROSITE" id="PS00135">
    <property type="entry name" value="TRYPSIN_SER"/>
    <property type="match status" value="1"/>
</dbReference>